<gene>
    <name evidence="1" type="primary">rplK</name>
    <name type="ordered locus">LAF_0268</name>
</gene>
<name>RL11_LIMF3</name>
<comment type="function">
    <text evidence="1">Forms part of the ribosomal stalk which helps the ribosome interact with GTP-bound translation factors.</text>
</comment>
<comment type="subunit">
    <text evidence="1">Part of the ribosomal stalk of the 50S ribosomal subunit. Interacts with L10 and the large rRNA to form the base of the stalk. L10 forms an elongated spine to which L12 dimers bind in a sequential fashion forming a multimeric L10(L12)X complex.</text>
</comment>
<comment type="PTM">
    <text evidence="1">One or more lysine residues are methylated.</text>
</comment>
<comment type="similarity">
    <text evidence="1">Belongs to the universal ribosomal protein uL11 family.</text>
</comment>
<proteinExistence type="inferred from homology"/>
<dbReference type="EMBL" id="AP008937">
    <property type="protein sequence ID" value="BAG26604.1"/>
    <property type="molecule type" value="Genomic_DNA"/>
</dbReference>
<dbReference type="RefSeq" id="WP_004562745.1">
    <property type="nucleotide sequence ID" value="NC_010610.1"/>
</dbReference>
<dbReference type="SMR" id="B2GAC2"/>
<dbReference type="GeneID" id="83715411"/>
<dbReference type="KEGG" id="lfe:LAF_0268"/>
<dbReference type="eggNOG" id="COG0080">
    <property type="taxonomic scope" value="Bacteria"/>
</dbReference>
<dbReference type="HOGENOM" id="CLU_074237_2_1_9"/>
<dbReference type="Proteomes" id="UP000001697">
    <property type="component" value="Chromosome"/>
</dbReference>
<dbReference type="GO" id="GO:0022625">
    <property type="term" value="C:cytosolic large ribosomal subunit"/>
    <property type="evidence" value="ECO:0007669"/>
    <property type="project" value="TreeGrafter"/>
</dbReference>
<dbReference type="GO" id="GO:0070180">
    <property type="term" value="F:large ribosomal subunit rRNA binding"/>
    <property type="evidence" value="ECO:0007669"/>
    <property type="project" value="UniProtKB-UniRule"/>
</dbReference>
<dbReference type="GO" id="GO:0003735">
    <property type="term" value="F:structural constituent of ribosome"/>
    <property type="evidence" value="ECO:0007669"/>
    <property type="project" value="InterPro"/>
</dbReference>
<dbReference type="GO" id="GO:0006412">
    <property type="term" value="P:translation"/>
    <property type="evidence" value="ECO:0007669"/>
    <property type="project" value="UniProtKB-UniRule"/>
</dbReference>
<dbReference type="CDD" id="cd00349">
    <property type="entry name" value="Ribosomal_L11"/>
    <property type="match status" value="1"/>
</dbReference>
<dbReference type="FunFam" id="1.10.10.250:FF:000001">
    <property type="entry name" value="50S ribosomal protein L11"/>
    <property type="match status" value="1"/>
</dbReference>
<dbReference type="FunFam" id="3.30.1550.10:FF:000001">
    <property type="entry name" value="50S ribosomal protein L11"/>
    <property type="match status" value="1"/>
</dbReference>
<dbReference type="Gene3D" id="1.10.10.250">
    <property type="entry name" value="Ribosomal protein L11, C-terminal domain"/>
    <property type="match status" value="1"/>
</dbReference>
<dbReference type="Gene3D" id="3.30.1550.10">
    <property type="entry name" value="Ribosomal protein L11/L12, N-terminal domain"/>
    <property type="match status" value="1"/>
</dbReference>
<dbReference type="HAMAP" id="MF_00736">
    <property type="entry name" value="Ribosomal_uL11"/>
    <property type="match status" value="1"/>
</dbReference>
<dbReference type="InterPro" id="IPR000911">
    <property type="entry name" value="Ribosomal_uL11"/>
</dbReference>
<dbReference type="InterPro" id="IPR006519">
    <property type="entry name" value="Ribosomal_uL11_bac-typ"/>
</dbReference>
<dbReference type="InterPro" id="IPR020783">
    <property type="entry name" value="Ribosomal_uL11_C"/>
</dbReference>
<dbReference type="InterPro" id="IPR036769">
    <property type="entry name" value="Ribosomal_uL11_C_sf"/>
</dbReference>
<dbReference type="InterPro" id="IPR020785">
    <property type="entry name" value="Ribosomal_uL11_CS"/>
</dbReference>
<dbReference type="InterPro" id="IPR020784">
    <property type="entry name" value="Ribosomal_uL11_N"/>
</dbReference>
<dbReference type="InterPro" id="IPR036796">
    <property type="entry name" value="Ribosomal_uL11_N_sf"/>
</dbReference>
<dbReference type="NCBIfam" id="TIGR01632">
    <property type="entry name" value="L11_bact"/>
    <property type="match status" value="1"/>
</dbReference>
<dbReference type="PANTHER" id="PTHR11661">
    <property type="entry name" value="60S RIBOSOMAL PROTEIN L12"/>
    <property type="match status" value="1"/>
</dbReference>
<dbReference type="PANTHER" id="PTHR11661:SF1">
    <property type="entry name" value="LARGE RIBOSOMAL SUBUNIT PROTEIN UL11M"/>
    <property type="match status" value="1"/>
</dbReference>
<dbReference type="Pfam" id="PF00298">
    <property type="entry name" value="Ribosomal_L11"/>
    <property type="match status" value="1"/>
</dbReference>
<dbReference type="Pfam" id="PF03946">
    <property type="entry name" value="Ribosomal_L11_N"/>
    <property type="match status" value="1"/>
</dbReference>
<dbReference type="SMART" id="SM00649">
    <property type="entry name" value="RL11"/>
    <property type="match status" value="1"/>
</dbReference>
<dbReference type="SUPFAM" id="SSF54747">
    <property type="entry name" value="Ribosomal L11/L12e N-terminal domain"/>
    <property type="match status" value="1"/>
</dbReference>
<dbReference type="SUPFAM" id="SSF46906">
    <property type="entry name" value="Ribosomal protein L11, C-terminal domain"/>
    <property type="match status" value="1"/>
</dbReference>
<dbReference type="PROSITE" id="PS00359">
    <property type="entry name" value="RIBOSOMAL_L11"/>
    <property type="match status" value="1"/>
</dbReference>
<protein>
    <recommendedName>
        <fullName evidence="1">Large ribosomal subunit protein uL11</fullName>
    </recommendedName>
    <alternativeName>
        <fullName evidence="2">50S ribosomal protein L11</fullName>
    </alternativeName>
</protein>
<keyword id="KW-0488">Methylation</keyword>
<keyword id="KW-1185">Reference proteome</keyword>
<keyword id="KW-0687">Ribonucleoprotein</keyword>
<keyword id="KW-0689">Ribosomal protein</keyword>
<keyword id="KW-0694">RNA-binding</keyword>
<keyword id="KW-0699">rRNA-binding</keyword>
<reference key="1">
    <citation type="journal article" date="2008" name="DNA Res.">
        <title>Comparative genome analysis of Lactobacillus reuteri and Lactobacillus fermentum reveal a genomic island for reuterin and cobalamin production.</title>
        <authorList>
            <person name="Morita H."/>
            <person name="Toh H."/>
            <person name="Fukuda S."/>
            <person name="Horikawa H."/>
            <person name="Oshima K."/>
            <person name="Suzuki T."/>
            <person name="Murakami M."/>
            <person name="Hisamatsu S."/>
            <person name="Kato Y."/>
            <person name="Takizawa T."/>
            <person name="Fukuoka H."/>
            <person name="Yoshimura T."/>
            <person name="Itoh K."/>
            <person name="O'Sullivan D.J."/>
            <person name="McKay L.L."/>
            <person name="Ohno H."/>
            <person name="Kikuchi J."/>
            <person name="Masaoka T."/>
            <person name="Hattori M."/>
        </authorList>
    </citation>
    <scope>NUCLEOTIDE SEQUENCE [LARGE SCALE GENOMIC DNA]</scope>
    <source>
        <strain>NBRC 3956 / LMG 18251</strain>
    </source>
</reference>
<feature type="chain" id="PRO_1000195657" description="Large ribosomal subunit protein uL11">
    <location>
        <begin position="1"/>
        <end position="141"/>
    </location>
</feature>
<organism>
    <name type="scientific">Limosilactobacillus fermentum (strain NBRC 3956 / LMG 18251)</name>
    <name type="common">Lactobacillus fermentum</name>
    <dbReference type="NCBI Taxonomy" id="334390"/>
    <lineage>
        <taxon>Bacteria</taxon>
        <taxon>Bacillati</taxon>
        <taxon>Bacillota</taxon>
        <taxon>Bacilli</taxon>
        <taxon>Lactobacillales</taxon>
        <taxon>Lactobacillaceae</taxon>
        <taxon>Limosilactobacillus</taxon>
    </lineage>
</organism>
<accession>B2GAC2</accession>
<evidence type="ECO:0000255" key="1">
    <source>
        <dbReference type="HAMAP-Rule" id="MF_00736"/>
    </source>
</evidence>
<evidence type="ECO:0000305" key="2"/>
<sequence>MAKKVANVVKLQIPAGAATPAPPVGPALGQAGINIMGFTKEFNARTADQKGMLIPVVITVYEDRSFDFITKTPPAAVLLKKAAGVEHGSGEPNTNKVATVTKDQVKEIAETKMQDLNAADVEAAMRMIEGTARSMGFVVEG</sequence>